<comment type="function">
    <text evidence="1">Cleaves peptides in various proteins in a process that requires ATP hydrolysis. Has a chymotrypsin-like activity. Plays a major role in the degradation of misfolded proteins.</text>
</comment>
<comment type="catalytic activity">
    <reaction evidence="1">
        <text>Hydrolysis of proteins to small peptides in the presence of ATP and magnesium. alpha-casein is the usual test substrate. In the absence of ATP, only oligopeptides shorter than five residues are hydrolyzed (such as succinyl-Leu-Tyr-|-NHMec, and Leu-Tyr-Leu-|-Tyr-Trp, in which cleavage of the -Tyr-|-Leu- and -Tyr-|-Trp bonds also occurs).</text>
        <dbReference type="EC" id="3.4.21.92"/>
    </reaction>
</comment>
<comment type="subunit">
    <text evidence="1">Fourteen ClpP subunits assemble into 2 heptameric rings which stack back to back to give a disk-like structure with a central cavity, resembling the structure of eukaryotic proteasomes.</text>
</comment>
<comment type="subcellular location">
    <subcellularLocation>
        <location evidence="1">Cytoplasm</location>
    </subcellularLocation>
</comment>
<comment type="similarity">
    <text evidence="1">Belongs to the peptidase S14 family.</text>
</comment>
<feature type="chain" id="PRO_1000189631" description="ATP-dependent Clp protease proteolytic subunit">
    <location>
        <begin position="1"/>
        <end position="203"/>
    </location>
</feature>
<feature type="active site" description="Nucleophile" evidence="1">
    <location>
        <position position="100"/>
    </location>
</feature>
<feature type="active site" evidence="1">
    <location>
        <position position="125"/>
    </location>
</feature>
<organism>
    <name type="scientific">Anaeromyxobacter sp. (strain K)</name>
    <dbReference type="NCBI Taxonomy" id="447217"/>
    <lineage>
        <taxon>Bacteria</taxon>
        <taxon>Pseudomonadati</taxon>
        <taxon>Myxococcota</taxon>
        <taxon>Myxococcia</taxon>
        <taxon>Myxococcales</taxon>
        <taxon>Cystobacterineae</taxon>
        <taxon>Anaeromyxobacteraceae</taxon>
        <taxon>Anaeromyxobacter</taxon>
    </lineage>
</organism>
<gene>
    <name evidence="1" type="primary">clpP</name>
    <name type="ordered locus">AnaeK_3435</name>
</gene>
<sequence>MPYIPMPYVVEQTHRGERSYDIYSRLLKDRIIFLGTPVDDDVANVIIAQLLFLESEDPDKDINLYINSPGGSVTSGLAIYDTMQYVKPQVSTICLGQAASMGAFLLAGGAAGKRFAVPNARIMIHQLSGGFQGQATDIEIQAKEALRLKAKLNEIMARHTRQPIERIERDTERDYFMSAGEAKEYGLIDDVFLHKKAAEKKPQ</sequence>
<proteinExistence type="inferred from homology"/>
<keyword id="KW-0963">Cytoplasm</keyword>
<keyword id="KW-0378">Hydrolase</keyword>
<keyword id="KW-0645">Protease</keyword>
<keyword id="KW-0720">Serine protease</keyword>
<dbReference type="EC" id="3.4.21.92" evidence="1"/>
<dbReference type="EMBL" id="CP001131">
    <property type="protein sequence ID" value="ACG74648.1"/>
    <property type="molecule type" value="Genomic_DNA"/>
</dbReference>
<dbReference type="RefSeq" id="WP_012527421.1">
    <property type="nucleotide sequence ID" value="NC_011145.1"/>
</dbReference>
<dbReference type="SMR" id="B4UAX9"/>
<dbReference type="MEROPS" id="S14.001"/>
<dbReference type="KEGG" id="ank:AnaeK_3435"/>
<dbReference type="HOGENOM" id="CLU_058707_3_2_7"/>
<dbReference type="OrthoDB" id="9802800at2"/>
<dbReference type="Proteomes" id="UP000001871">
    <property type="component" value="Chromosome"/>
</dbReference>
<dbReference type="GO" id="GO:0005737">
    <property type="term" value="C:cytoplasm"/>
    <property type="evidence" value="ECO:0007669"/>
    <property type="project" value="UniProtKB-SubCell"/>
</dbReference>
<dbReference type="GO" id="GO:0009368">
    <property type="term" value="C:endopeptidase Clp complex"/>
    <property type="evidence" value="ECO:0007669"/>
    <property type="project" value="TreeGrafter"/>
</dbReference>
<dbReference type="GO" id="GO:0004176">
    <property type="term" value="F:ATP-dependent peptidase activity"/>
    <property type="evidence" value="ECO:0007669"/>
    <property type="project" value="InterPro"/>
</dbReference>
<dbReference type="GO" id="GO:0051117">
    <property type="term" value="F:ATPase binding"/>
    <property type="evidence" value="ECO:0007669"/>
    <property type="project" value="TreeGrafter"/>
</dbReference>
<dbReference type="GO" id="GO:0004252">
    <property type="term" value="F:serine-type endopeptidase activity"/>
    <property type="evidence" value="ECO:0007669"/>
    <property type="project" value="UniProtKB-UniRule"/>
</dbReference>
<dbReference type="GO" id="GO:0006515">
    <property type="term" value="P:protein quality control for misfolded or incompletely synthesized proteins"/>
    <property type="evidence" value="ECO:0007669"/>
    <property type="project" value="TreeGrafter"/>
</dbReference>
<dbReference type="CDD" id="cd07017">
    <property type="entry name" value="S14_ClpP_2"/>
    <property type="match status" value="1"/>
</dbReference>
<dbReference type="FunFam" id="3.90.226.10:FF:000001">
    <property type="entry name" value="ATP-dependent Clp protease proteolytic subunit"/>
    <property type="match status" value="1"/>
</dbReference>
<dbReference type="Gene3D" id="3.90.226.10">
    <property type="entry name" value="2-enoyl-CoA Hydratase, Chain A, domain 1"/>
    <property type="match status" value="1"/>
</dbReference>
<dbReference type="HAMAP" id="MF_00444">
    <property type="entry name" value="ClpP"/>
    <property type="match status" value="1"/>
</dbReference>
<dbReference type="InterPro" id="IPR001907">
    <property type="entry name" value="ClpP"/>
</dbReference>
<dbReference type="InterPro" id="IPR029045">
    <property type="entry name" value="ClpP/crotonase-like_dom_sf"/>
</dbReference>
<dbReference type="InterPro" id="IPR023562">
    <property type="entry name" value="ClpP/TepA"/>
</dbReference>
<dbReference type="InterPro" id="IPR018215">
    <property type="entry name" value="ClpP_Ser_AS"/>
</dbReference>
<dbReference type="NCBIfam" id="TIGR00493">
    <property type="entry name" value="clpP"/>
    <property type="match status" value="1"/>
</dbReference>
<dbReference type="NCBIfam" id="NF001368">
    <property type="entry name" value="PRK00277.1"/>
    <property type="match status" value="1"/>
</dbReference>
<dbReference type="NCBIfam" id="NF009205">
    <property type="entry name" value="PRK12553.1"/>
    <property type="match status" value="1"/>
</dbReference>
<dbReference type="PANTHER" id="PTHR10381">
    <property type="entry name" value="ATP-DEPENDENT CLP PROTEASE PROTEOLYTIC SUBUNIT"/>
    <property type="match status" value="1"/>
</dbReference>
<dbReference type="PANTHER" id="PTHR10381:SF70">
    <property type="entry name" value="ATP-DEPENDENT CLP PROTEASE PROTEOLYTIC SUBUNIT"/>
    <property type="match status" value="1"/>
</dbReference>
<dbReference type="Pfam" id="PF00574">
    <property type="entry name" value="CLP_protease"/>
    <property type="match status" value="1"/>
</dbReference>
<dbReference type="PRINTS" id="PR00127">
    <property type="entry name" value="CLPPROTEASEP"/>
</dbReference>
<dbReference type="SUPFAM" id="SSF52096">
    <property type="entry name" value="ClpP/crotonase"/>
    <property type="match status" value="1"/>
</dbReference>
<dbReference type="PROSITE" id="PS00381">
    <property type="entry name" value="CLP_PROTEASE_SER"/>
    <property type="match status" value="1"/>
</dbReference>
<accession>B4UAX9</accession>
<protein>
    <recommendedName>
        <fullName evidence="1">ATP-dependent Clp protease proteolytic subunit</fullName>
        <ecNumber evidence="1">3.4.21.92</ecNumber>
    </recommendedName>
    <alternativeName>
        <fullName evidence="1">Endopeptidase Clp</fullName>
    </alternativeName>
</protein>
<reference key="1">
    <citation type="submission" date="2008-08" db="EMBL/GenBank/DDBJ databases">
        <title>Complete sequence of Anaeromyxobacter sp. K.</title>
        <authorList>
            <consortium name="US DOE Joint Genome Institute"/>
            <person name="Lucas S."/>
            <person name="Copeland A."/>
            <person name="Lapidus A."/>
            <person name="Glavina del Rio T."/>
            <person name="Dalin E."/>
            <person name="Tice H."/>
            <person name="Bruce D."/>
            <person name="Goodwin L."/>
            <person name="Pitluck S."/>
            <person name="Saunders E."/>
            <person name="Brettin T."/>
            <person name="Detter J.C."/>
            <person name="Han C."/>
            <person name="Larimer F."/>
            <person name="Land M."/>
            <person name="Hauser L."/>
            <person name="Kyrpides N."/>
            <person name="Ovchinnikiva G."/>
            <person name="Beliaev A."/>
        </authorList>
    </citation>
    <scope>NUCLEOTIDE SEQUENCE [LARGE SCALE GENOMIC DNA]</scope>
    <source>
        <strain>K</strain>
    </source>
</reference>
<evidence type="ECO:0000255" key="1">
    <source>
        <dbReference type="HAMAP-Rule" id="MF_00444"/>
    </source>
</evidence>
<name>CLPP_ANASK</name>